<organism>
    <name type="scientific">Mus musculus</name>
    <name type="common">Mouse</name>
    <dbReference type="NCBI Taxonomy" id="10090"/>
    <lineage>
        <taxon>Eukaryota</taxon>
        <taxon>Metazoa</taxon>
        <taxon>Chordata</taxon>
        <taxon>Craniata</taxon>
        <taxon>Vertebrata</taxon>
        <taxon>Euteleostomi</taxon>
        <taxon>Mammalia</taxon>
        <taxon>Eutheria</taxon>
        <taxon>Euarchontoglires</taxon>
        <taxon>Glires</taxon>
        <taxon>Rodentia</taxon>
        <taxon>Myomorpha</taxon>
        <taxon>Muroidea</taxon>
        <taxon>Muridae</taxon>
        <taxon>Murinae</taxon>
        <taxon>Mus</taxon>
        <taxon>Mus</taxon>
    </lineage>
</organism>
<comment type="function">
    <text>May play an important role in the control of the immune response and during pregnancy.</text>
</comment>
<comment type="cofactor">
    <cofactor evidence="1">
        <name>Zn(2+)</name>
        <dbReference type="ChEBI" id="CHEBI:29105"/>
    </cofactor>
    <text evidence="1">Binds 1 zinc ion per subunit.</text>
</comment>
<comment type="subcellular location">
    <subcellularLocation>
        <location>Secreted</location>
    </subcellularLocation>
</comment>
<comment type="tissue specificity">
    <text>Expressed highly in uterus during pregnancy.</text>
</comment>
<comment type="developmental stage">
    <text evidence="6">From the prepubertal period to day 5.5 of pregnancy is weakly expressed. From day 5.5 of pregnancy, an increase of expression is observed. At day 12.5 expression is higher.</text>
</comment>
<comment type="induction">
    <text evidence="6">Induced by immunization in mature dendritic cells (DC), in marginal zone (MZ) metallophils, in follicular DC (FDC) and tingible body macrophages of germinal center. Down-regulated by steroid hormones and PRL.</text>
</comment>
<dbReference type="EC" id="3.4.24.-"/>
<dbReference type="EMBL" id="AJ242912">
    <property type="protein sequence ID" value="CAB54557.1"/>
    <property type="molecule type" value="mRNA"/>
</dbReference>
<dbReference type="EMBL" id="BC046324">
    <property type="protein sequence ID" value="AAH46324.1"/>
    <property type="molecule type" value="mRNA"/>
</dbReference>
<dbReference type="CCDS" id="CCDS49532.1"/>
<dbReference type="RefSeq" id="NP_067450.1">
    <property type="nucleotide sequence ID" value="NM_021475.3"/>
</dbReference>
<dbReference type="SMR" id="Q9R0X2"/>
<dbReference type="STRING" id="10090.ENSMUSP00000022641"/>
<dbReference type="MEROPS" id="M12.219"/>
<dbReference type="GlyCosmos" id="Q9R0X2">
    <property type="glycosylation" value="2 sites, No reported glycans"/>
</dbReference>
<dbReference type="GlyGen" id="Q9R0X2">
    <property type="glycosylation" value="2 sites"/>
</dbReference>
<dbReference type="iPTMnet" id="Q9R0X2"/>
<dbReference type="PhosphoSitePlus" id="Q9R0X2"/>
<dbReference type="CPTAC" id="non-CPTAC-3557"/>
<dbReference type="PaxDb" id="10090-ENSMUSP00000022641"/>
<dbReference type="PeptideAtlas" id="Q9R0X2"/>
<dbReference type="ProteomicsDB" id="281938"/>
<dbReference type="Antibodypedia" id="22827">
    <property type="antibodies" value="165 antibodies from 29 providers"/>
</dbReference>
<dbReference type="DNASU" id="58860"/>
<dbReference type="Ensembl" id="ENSMUST00000022641.9">
    <property type="protein sequence ID" value="ENSMUSP00000022641.8"/>
    <property type="gene ID" value="ENSMUSG00000022057.9"/>
</dbReference>
<dbReference type="GeneID" id="58860"/>
<dbReference type="KEGG" id="mmu:58860"/>
<dbReference type="UCSC" id="uc007uls.1">
    <property type="organism name" value="mouse"/>
</dbReference>
<dbReference type="AGR" id="MGI:1917650"/>
<dbReference type="CTD" id="27299"/>
<dbReference type="MGI" id="MGI:1917650">
    <property type="gene designation" value="Adamdec1"/>
</dbReference>
<dbReference type="VEuPathDB" id="HostDB:ENSMUSG00000022057"/>
<dbReference type="eggNOG" id="KOG3607">
    <property type="taxonomic scope" value="Eukaryota"/>
</dbReference>
<dbReference type="GeneTree" id="ENSGT00900000141143"/>
<dbReference type="HOGENOM" id="CLU_012714_8_0_1"/>
<dbReference type="InParanoid" id="Q9R0X2"/>
<dbReference type="OMA" id="KMKIHDH"/>
<dbReference type="OrthoDB" id="5951731at2759"/>
<dbReference type="PhylomeDB" id="Q9R0X2"/>
<dbReference type="TreeFam" id="TF314733"/>
<dbReference type="BioGRID-ORCS" id="58860">
    <property type="hits" value="1 hit in 79 CRISPR screens"/>
</dbReference>
<dbReference type="PRO" id="PR:Q9R0X2"/>
<dbReference type="Proteomes" id="UP000000589">
    <property type="component" value="Chromosome 14"/>
</dbReference>
<dbReference type="RNAct" id="Q9R0X2">
    <property type="molecule type" value="protein"/>
</dbReference>
<dbReference type="Bgee" id="ENSMUSG00000022057">
    <property type="expression patterns" value="Expressed in right colon and 55 other cell types or tissues"/>
</dbReference>
<dbReference type="ExpressionAtlas" id="Q9R0X2">
    <property type="expression patterns" value="baseline and differential"/>
</dbReference>
<dbReference type="GO" id="GO:0005576">
    <property type="term" value="C:extracellular region"/>
    <property type="evidence" value="ECO:0007669"/>
    <property type="project" value="UniProtKB-SubCell"/>
</dbReference>
<dbReference type="GO" id="GO:0046872">
    <property type="term" value="F:metal ion binding"/>
    <property type="evidence" value="ECO:0007669"/>
    <property type="project" value="UniProtKB-KW"/>
</dbReference>
<dbReference type="GO" id="GO:0004222">
    <property type="term" value="F:metalloendopeptidase activity"/>
    <property type="evidence" value="ECO:0007669"/>
    <property type="project" value="InterPro"/>
</dbReference>
<dbReference type="GO" id="GO:0006508">
    <property type="term" value="P:proteolysis"/>
    <property type="evidence" value="ECO:0007669"/>
    <property type="project" value="UniProtKB-KW"/>
</dbReference>
<dbReference type="CDD" id="cd04269">
    <property type="entry name" value="ZnMc_adamalysin_II_like"/>
    <property type="match status" value="1"/>
</dbReference>
<dbReference type="FunFam" id="3.40.390.10:FF:000002">
    <property type="entry name" value="Disintegrin and metalloproteinase domain-containing protein 22"/>
    <property type="match status" value="1"/>
</dbReference>
<dbReference type="Gene3D" id="3.40.390.10">
    <property type="entry name" value="Collagenase (Catalytic Domain)"/>
    <property type="match status" value="1"/>
</dbReference>
<dbReference type="Gene3D" id="4.10.70.10">
    <property type="entry name" value="Disintegrin domain"/>
    <property type="match status" value="1"/>
</dbReference>
<dbReference type="InterPro" id="IPR001762">
    <property type="entry name" value="Disintegrin_dom"/>
</dbReference>
<dbReference type="InterPro" id="IPR036436">
    <property type="entry name" value="Disintegrin_dom_sf"/>
</dbReference>
<dbReference type="InterPro" id="IPR024079">
    <property type="entry name" value="MetalloPept_cat_dom_sf"/>
</dbReference>
<dbReference type="InterPro" id="IPR001590">
    <property type="entry name" value="Peptidase_M12B"/>
</dbReference>
<dbReference type="InterPro" id="IPR002870">
    <property type="entry name" value="Peptidase_M12B_N"/>
</dbReference>
<dbReference type="InterPro" id="IPR034027">
    <property type="entry name" value="Reprolysin_adamalysin"/>
</dbReference>
<dbReference type="PANTHER" id="PTHR11905">
    <property type="entry name" value="ADAM A DISINTEGRIN AND METALLOPROTEASE DOMAIN"/>
    <property type="match status" value="1"/>
</dbReference>
<dbReference type="PANTHER" id="PTHR11905:SF125">
    <property type="entry name" value="ADAM DEC1"/>
    <property type="match status" value="1"/>
</dbReference>
<dbReference type="Pfam" id="PF01562">
    <property type="entry name" value="Pep_M12B_propep"/>
    <property type="match status" value="1"/>
</dbReference>
<dbReference type="Pfam" id="PF01421">
    <property type="entry name" value="Reprolysin"/>
    <property type="match status" value="1"/>
</dbReference>
<dbReference type="SMART" id="SM00050">
    <property type="entry name" value="DISIN"/>
    <property type="match status" value="1"/>
</dbReference>
<dbReference type="SUPFAM" id="SSF55486">
    <property type="entry name" value="Metalloproteases ('zincins'), catalytic domain"/>
    <property type="match status" value="1"/>
</dbReference>
<dbReference type="PROSITE" id="PS50215">
    <property type="entry name" value="ADAM_MEPRO"/>
    <property type="match status" value="1"/>
</dbReference>
<dbReference type="PROSITE" id="PS50214">
    <property type="entry name" value="DISINTEGRIN_2"/>
    <property type="match status" value="1"/>
</dbReference>
<dbReference type="PROSITE" id="PS00142">
    <property type="entry name" value="ZINC_PROTEASE"/>
    <property type="match status" value="1"/>
</dbReference>
<feature type="signal peptide" evidence="2">
    <location>
        <begin position="1"/>
        <end position="33"/>
    </location>
</feature>
<feature type="propeptide" id="PRO_0000029148" evidence="2">
    <location>
        <begin position="34"/>
        <end position="208"/>
    </location>
</feature>
<feature type="chain" id="PRO_0000029149" description="ADAM DEC1">
    <location>
        <begin position="209"/>
        <end position="467"/>
    </location>
</feature>
<feature type="domain" description="Peptidase M12B" evidence="4">
    <location>
        <begin position="217"/>
        <end position="411"/>
    </location>
</feature>
<feature type="domain" description="Disintegrin" evidence="3">
    <location>
        <begin position="418"/>
        <end position="467"/>
    </location>
</feature>
<feature type="active site" evidence="4 5">
    <location>
        <position position="352"/>
    </location>
</feature>
<feature type="binding site" evidence="1">
    <location>
        <position position="351"/>
    </location>
    <ligand>
        <name>Zn(2+)</name>
        <dbReference type="ChEBI" id="CHEBI:29105"/>
        <note>catalytic</note>
    </ligand>
</feature>
<feature type="binding site" evidence="1">
    <location>
        <position position="355"/>
    </location>
    <ligand>
        <name>Zn(2+)</name>
        <dbReference type="ChEBI" id="CHEBI:29105"/>
        <note>catalytic</note>
    </ligand>
</feature>
<feature type="binding site" evidence="2">
    <location>
        <position position="361"/>
    </location>
    <ligand>
        <name>Zn(2+)</name>
        <dbReference type="ChEBI" id="CHEBI:29105"/>
        <note>catalytic</note>
    </ligand>
</feature>
<feature type="glycosylation site" description="N-linked (GlcNAc...) asparagine" evidence="2">
    <location>
        <position position="61"/>
    </location>
</feature>
<feature type="glycosylation site" description="N-linked (GlcNAc...) asparagine" evidence="2">
    <location>
        <position position="236"/>
    </location>
</feature>
<feature type="disulfide bond" evidence="1">
    <location>
        <begin position="327"/>
        <end position="406"/>
    </location>
</feature>
<feature type="disulfide bond" evidence="1">
    <location>
        <begin position="368"/>
        <end position="373"/>
    </location>
</feature>
<name>ADEC1_MOUSE</name>
<accession>Q9R0X2</accession>
<keyword id="KW-1015">Disulfide bond</keyword>
<keyword id="KW-0325">Glycoprotein</keyword>
<keyword id="KW-0378">Hydrolase</keyword>
<keyword id="KW-0479">Metal-binding</keyword>
<keyword id="KW-0482">Metalloprotease</keyword>
<keyword id="KW-0645">Protease</keyword>
<keyword id="KW-1185">Reference proteome</keyword>
<keyword id="KW-0964">Secreted</keyword>
<keyword id="KW-0732">Signal</keyword>
<keyword id="KW-0862">Zinc</keyword>
<keyword id="KW-0865">Zymogen</keyword>
<protein>
    <recommendedName>
        <fullName>ADAM DEC1</fullName>
        <ecNumber>3.4.24.-</ecNumber>
    </recommendedName>
    <alternativeName>
        <fullName>A disintegrin and metalloproteinase domain-like protein decysin-1</fullName>
        <shortName>ADAM-like protein decysin-1</shortName>
    </alternativeName>
</protein>
<reference key="1">
    <citation type="journal article" date="2001" name="J. Immunol.">
        <title>Mannose receptor ligand-positive cells express the metalloprotease decysin in the B cell follicle.</title>
        <authorList>
            <person name="Mueller C.G.F."/>
            <person name="Cremer I."/>
            <person name="Paulet P.E."/>
            <person name="Niida S."/>
            <person name="Maeda N."/>
            <person name="Lebeque S."/>
            <person name="Fridman W.H."/>
            <person name="Sautes-Fridman C."/>
        </authorList>
    </citation>
    <scope>NUCLEOTIDE SEQUENCE [MRNA]</scope>
</reference>
<reference key="2">
    <citation type="journal article" date="2004" name="Genome Res.">
        <title>The status, quality, and expansion of the NIH full-length cDNA project: the Mammalian Gene Collection (MGC).</title>
        <authorList>
            <consortium name="The MGC Project Team"/>
        </authorList>
    </citation>
    <scope>NUCLEOTIDE SEQUENCE [LARGE SCALE MRNA]</scope>
    <source>
        <strain>FVB/N</strain>
        <tissue>Colon</tissue>
    </source>
</reference>
<reference key="3">
    <citation type="journal article" date="2003" name="Biol. Reprod.">
        <title>Decysin, a new member of the metalloproteinase family, is regulated by prolactin and steroids during mouse pregnancy.</title>
        <authorList>
            <person name="Baran N."/>
            <person name="Kelly P.A."/>
            <person name="Binart N."/>
        </authorList>
    </citation>
    <scope>INDUCTION</scope>
    <scope>DEVELOPMENTAL STAGE</scope>
</reference>
<evidence type="ECO:0000250" key="1"/>
<evidence type="ECO:0000255" key="2"/>
<evidence type="ECO:0000255" key="3">
    <source>
        <dbReference type="PROSITE-ProRule" id="PRU00068"/>
    </source>
</evidence>
<evidence type="ECO:0000255" key="4">
    <source>
        <dbReference type="PROSITE-ProRule" id="PRU00276"/>
    </source>
</evidence>
<evidence type="ECO:0000255" key="5">
    <source>
        <dbReference type="PROSITE-ProRule" id="PRU10095"/>
    </source>
</evidence>
<evidence type="ECO:0000269" key="6">
    <source>
    </source>
</evidence>
<proteinExistence type="evidence at transcript level"/>
<sequence length="467" mass="52956">MLPGTSRLPTEASMSWVLLSVLWLIIQIQVIDATLTPELKPHEIVRPKKLPISQKRGLENNQTERYGKEEKYAPEVQYQIILNGEEIVFHLKRTKHLLGPDYTETSYSPRGEESTRHSQDVKPCYYEGHIQNARGSLARISTCDGLRGYFTHRDQRYQIKPLQSTDEGEHAVLPYSWKGQDTVHDKDAEKQVVRKRSHLRTSRSLKNPNEDLLQGQKYIGLFLVLDNAYYKLYNGNVTQMRTFLFKVLNLLNMIYKTINIQVSLVGMEIWSDQDKIKVEPNLGATFTHFMRWHYSNLGKRIHNHAQLLSGASFRHGRVGMAAGNSFCTTSSVSVIEAKKKNNVALVALMSHELGHALGMKDVPYYTKCPSGSCVMNQYLSSKFPKDFSTVSRSHFQGFLSSRNARCLLLAPDPKNIIKPTCGNQVLDVGEECDCGSPEECTNLCCEPLTCRLKSQPDCSEASNHITE</sequence>
<gene>
    <name type="primary">Adamdec1</name>
</gene>